<feature type="chain" id="PRO_0000058713" description="14-3-3-like protein A">
    <location>
        <begin position="1"/>
        <end position="261"/>
    </location>
</feature>
<comment type="similarity">
    <text evidence="1">Belongs to the 14-3-3 family.</text>
</comment>
<protein>
    <recommendedName>
        <fullName>14-3-3-like protein A</fullName>
    </recommendedName>
    <alternativeName>
        <fullName>VFA-1433A</fullName>
    </alternativeName>
</protein>
<reference key="1">
    <citation type="submission" date="1995-02" db="EMBL/GenBank/DDBJ databases">
        <authorList>
            <person name="Saalbach G."/>
            <person name="Christov V."/>
            <person name="Schwerdel M."/>
        </authorList>
    </citation>
    <scope>NUCLEOTIDE SEQUENCE [MRNA]</scope>
    <source>
        <tissue>Cotyledon</tissue>
    </source>
</reference>
<sequence length="261" mass="29420">MATAPTPREEFVYMAKLAEQAERYEEMVEFMEKVTAAVESEELTVEERNLLSVAYKNVIGARRASWRIISSIEQKEESRGNDEHVSVIRDYRSKIETELSNICNGILKLLDSRLIPSAALGDSKVFYLKMKGDYHRYLAEFKSGAERKDAAESTLTAYKSAQDIANTELPPTHPIRLGLALNFSVFYYEILNSPDRACGLAKQAFDEAIAELDTLGEESYKDSTLIMQLLRDNLTLWTSDMQDDGADEIKEAAPKGNDEPQ</sequence>
<accession>P42653</accession>
<name>1433A_VICFA</name>
<evidence type="ECO:0000305" key="1"/>
<proteinExistence type="evidence at transcript level"/>
<organism>
    <name type="scientific">Vicia faba</name>
    <name type="common">Broad bean</name>
    <name type="synonym">Faba vulgaris</name>
    <dbReference type="NCBI Taxonomy" id="3906"/>
    <lineage>
        <taxon>Eukaryota</taxon>
        <taxon>Viridiplantae</taxon>
        <taxon>Streptophyta</taxon>
        <taxon>Embryophyta</taxon>
        <taxon>Tracheophyta</taxon>
        <taxon>Spermatophyta</taxon>
        <taxon>Magnoliopsida</taxon>
        <taxon>eudicotyledons</taxon>
        <taxon>Gunneridae</taxon>
        <taxon>Pentapetalae</taxon>
        <taxon>rosids</taxon>
        <taxon>fabids</taxon>
        <taxon>Fabales</taxon>
        <taxon>Fabaceae</taxon>
        <taxon>Papilionoideae</taxon>
        <taxon>50 kb inversion clade</taxon>
        <taxon>NPAAA clade</taxon>
        <taxon>Hologalegina</taxon>
        <taxon>IRL clade</taxon>
        <taxon>Fabeae</taxon>
        <taxon>Vicia</taxon>
    </lineage>
</organism>
<dbReference type="EMBL" id="Z48504">
    <property type="protein sequence ID" value="CAA88415.1"/>
    <property type="molecule type" value="mRNA"/>
</dbReference>
<dbReference type="PIR" id="S52899">
    <property type="entry name" value="S52899"/>
</dbReference>
<dbReference type="SMR" id="P42653"/>
<dbReference type="EnsemblPlants" id="Vfaba.Hedin2.R1.Ung120200.1">
    <property type="protein sequence ID" value="cds:Vfaba.Hedin2.R1.Ung120200.1"/>
    <property type="gene ID" value="Vfaba.Hedin2.R1.Ung120200"/>
</dbReference>
<dbReference type="Gramene" id="Vfaba.Hedin2.R1.Ung120200.1">
    <property type="protein sequence ID" value="cds:Vfaba.Hedin2.R1.Ung120200.1"/>
    <property type="gene ID" value="Vfaba.Hedin2.R1.Ung120200"/>
</dbReference>
<dbReference type="FunFam" id="1.20.190.20:FF:000002">
    <property type="entry name" value="14-3-3 protein epsilon"/>
    <property type="match status" value="1"/>
</dbReference>
<dbReference type="Gene3D" id="1.20.190.20">
    <property type="entry name" value="14-3-3 domain"/>
    <property type="match status" value="1"/>
</dbReference>
<dbReference type="InterPro" id="IPR000308">
    <property type="entry name" value="14-3-3"/>
</dbReference>
<dbReference type="InterPro" id="IPR023409">
    <property type="entry name" value="14-3-3_CS"/>
</dbReference>
<dbReference type="InterPro" id="IPR036815">
    <property type="entry name" value="14-3-3_dom_sf"/>
</dbReference>
<dbReference type="InterPro" id="IPR023410">
    <property type="entry name" value="14-3-3_domain"/>
</dbReference>
<dbReference type="PANTHER" id="PTHR18860">
    <property type="entry name" value="14-3-3 PROTEIN"/>
    <property type="match status" value="1"/>
</dbReference>
<dbReference type="Pfam" id="PF00244">
    <property type="entry name" value="14-3-3"/>
    <property type="match status" value="1"/>
</dbReference>
<dbReference type="PIRSF" id="PIRSF000868">
    <property type="entry name" value="14-3-3"/>
    <property type="match status" value="1"/>
</dbReference>
<dbReference type="PRINTS" id="PR00305">
    <property type="entry name" value="1433ZETA"/>
</dbReference>
<dbReference type="SMART" id="SM00101">
    <property type="entry name" value="14_3_3"/>
    <property type="match status" value="1"/>
</dbReference>
<dbReference type="SUPFAM" id="SSF48445">
    <property type="entry name" value="14-3-3 protein"/>
    <property type="match status" value="1"/>
</dbReference>
<dbReference type="PROSITE" id="PS00796">
    <property type="entry name" value="1433_1"/>
    <property type="match status" value="1"/>
</dbReference>
<dbReference type="PROSITE" id="PS00797">
    <property type="entry name" value="1433_2"/>
    <property type="match status" value="1"/>
</dbReference>